<comment type="function">
    <text evidence="1">Allows the formation of correctly charged Gln-tRNA(Gln) through the transamidation of misacylated Glu-tRNA(Gln) in organisms which lack glutaminyl-tRNA synthetase. The reaction takes place in the presence of glutamine and ATP through an activated gamma-phospho-Glu-tRNA(Gln).</text>
</comment>
<comment type="catalytic activity">
    <reaction evidence="1">
        <text>L-glutamyl-tRNA(Gln) + L-glutamine + ATP + H2O = L-glutaminyl-tRNA(Gln) + L-glutamate + ADP + phosphate + H(+)</text>
        <dbReference type="Rhea" id="RHEA:17521"/>
        <dbReference type="Rhea" id="RHEA-COMP:9681"/>
        <dbReference type="Rhea" id="RHEA-COMP:9684"/>
        <dbReference type="ChEBI" id="CHEBI:15377"/>
        <dbReference type="ChEBI" id="CHEBI:15378"/>
        <dbReference type="ChEBI" id="CHEBI:29985"/>
        <dbReference type="ChEBI" id="CHEBI:30616"/>
        <dbReference type="ChEBI" id="CHEBI:43474"/>
        <dbReference type="ChEBI" id="CHEBI:58359"/>
        <dbReference type="ChEBI" id="CHEBI:78520"/>
        <dbReference type="ChEBI" id="CHEBI:78521"/>
        <dbReference type="ChEBI" id="CHEBI:456216"/>
        <dbReference type="EC" id="6.3.5.7"/>
    </reaction>
</comment>
<comment type="subunit">
    <text evidence="1">Heterotrimer of A, B and C subunits.</text>
</comment>
<comment type="similarity">
    <text evidence="1">Belongs to the amidase family. GatA subfamily.</text>
</comment>
<evidence type="ECO:0000255" key="1">
    <source>
        <dbReference type="HAMAP-Rule" id="MF_00120"/>
    </source>
</evidence>
<name>GATA_STRPB</name>
<accession>Q1JA74</accession>
<protein>
    <recommendedName>
        <fullName evidence="1">Glutamyl-tRNA(Gln) amidotransferase subunit A</fullName>
        <shortName evidence="1">Glu-ADT subunit A</shortName>
        <ecNumber evidence="1">6.3.5.7</ecNumber>
    </recommendedName>
</protein>
<sequence length="488" mass="52208">MSFNHKTIEELHDLLVAKEISATELTQKTLEDIKSREEAVGSFITVSEEAALKQAAAIDAKGIDADNLMSGIPLAVKDNISTKGILTTAASKMLYNYEPIFDATSVANAYAKDMIVIGKTNMDEFAMGGSTETSYFKKTKNAWDHTKVPGGSSGGSATAVASGQVRLSLGSDTGGSIRQPAAFNGVVGLKPTYGTVSRYGLIAFGSSLDQIGPFAPTVKENAQLLNVIASSDVKDATSAPVRIADYTSKIGRDIKGMKIAFPKEYLGEGIDPKIKETVLAAAKQFEALGATVEEVSLPHSKYGVAVYYIIASSEASSNLQRFDGIRYGFRADDAKNLDEIYVNTRSQGFGDEVKRRIMLGTFSLSSGYYDAYFKKAGQVRTLIIEDFDKVFADYDLILGPTTPAVAFGLDTLNHDPVAMYLADLLTIPVNLAGLPGISIPAGFVDGLPVGLQLIGPKYAEETIYQAAAAFEAVTDYHKQQPIIFGGDK</sequence>
<gene>
    <name evidence="1" type="primary">gatA</name>
    <name type="ordered locus">MGAS2096_Spy1535</name>
</gene>
<keyword id="KW-0067">ATP-binding</keyword>
<keyword id="KW-0436">Ligase</keyword>
<keyword id="KW-0547">Nucleotide-binding</keyword>
<keyword id="KW-0648">Protein biosynthesis</keyword>
<feature type="chain" id="PRO_1000015911" description="Glutamyl-tRNA(Gln) amidotransferase subunit A">
    <location>
        <begin position="1"/>
        <end position="488"/>
    </location>
</feature>
<feature type="active site" description="Charge relay system" evidence="1">
    <location>
        <position position="77"/>
    </location>
</feature>
<feature type="active site" description="Charge relay system" evidence="1">
    <location>
        <position position="152"/>
    </location>
</feature>
<feature type="active site" description="Acyl-ester intermediate" evidence="1">
    <location>
        <position position="176"/>
    </location>
</feature>
<proteinExistence type="inferred from homology"/>
<reference key="1">
    <citation type="journal article" date="2006" name="Proc. Natl. Acad. Sci. U.S.A.">
        <title>Molecular genetic anatomy of inter- and intraserotype variation in the human bacterial pathogen group A Streptococcus.</title>
        <authorList>
            <person name="Beres S.B."/>
            <person name="Richter E.W."/>
            <person name="Nagiec M.J."/>
            <person name="Sumby P."/>
            <person name="Porcella S.F."/>
            <person name="DeLeo F.R."/>
            <person name="Musser J.M."/>
        </authorList>
    </citation>
    <scope>NUCLEOTIDE SEQUENCE [LARGE SCALE GENOMIC DNA]</scope>
    <source>
        <strain>MGAS2096</strain>
    </source>
</reference>
<organism>
    <name type="scientific">Streptococcus pyogenes serotype M12 (strain MGAS2096)</name>
    <dbReference type="NCBI Taxonomy" id="370553"/>
    <lineage>
        <taxon>Bacteria</taxon>
        <taxon>Bacillati</taxon>
        <taxon>Bacillota</taxon>
        <taxon>Bacilli</taxon>
        <taxon>Lactobacillales</taxon>
        <taxon>Streptococcaceae</taxon>
        <taxon>Streptococcus</taxon>
    </lineage>
</organism>
<dbReference type="EC" id="6.3.5.7" evidence="1"/>
<dbReference type="EMBL" id="CP000261">
    <property type="protein sequence ID" value="ABF36587.1"/>
    <property type="molecule type" value="Genomic_DNA"/>
</dbReference>
<dbReference type="SMR" id="Q1JA74"/>
<dbReference type="KEGG" id="spj:MGAS2096_Spy1535"/>
<dbReference type="HOGENOM" id="CLU_009600_0_3_9"/>
<dbReference type="GO" id="GO:0030956">
    <property type="term" value="C:glutamyl-tRNA(Gln) amidotransferase complex"/>
    <property type="evidence" value="ECO:0007669"/>
    <property type="project" value="InterPro"/>
</dbReference>
<dbReference type="GO" id="GO:0005524">
    <property type="term" value="F:ATP binding"/>
    <property type="evidence" value="ECO:0007669"/>
    <property type="project" value="UniProtKB-KW"/>
</dbReference>
<dbReference type="GO" id="GO:0050567">
    <property type="term" value="F:glutaminyl-tRNA synthase (glutamine-hydrolyzing) activity"/>
    <property type="evidence" value="ECO:0007669"/>
    <property type="project" value="UniProtKB-UniRule"/>
</dbReference>
<dbReference type="GO" id="GO:0006412">
    <property type="term" value="P:translation"/>
    <property type="evidence" value="ECO:0007669"/>
    <property type="project" value="UniProtKB-UniRule"/>
</dbReference>
<dbReference type="Gene3D" id="3.90.1300.10">
    <property type="entry name" value="Amidase signature (AS) domain"/>
    <property type="match status" value="1"/>
</dbReference>
<dbReference type="HAMAP" id="MF_00120">
    <property type="entry name" value="GatA"/>
    <property type="match status" value="1"/>
</dbReference>
<dbReference type="InterPro" id="IPR000120">
    <property type="entry name" value="Amidase"/>
</dbReference>
<dbReference type="InterPro" id="IPR020556">
    <property type="entry name" value="Amidase_CS"/>
</dbReference>
<dbReference type="InterPro" id="IPR023631">
    <property type="entry name" value="Amidase_dom"/>
</dbReference>
<dbReference type="InterPro" id="IPR036928">
    <property type="entry name" value="AS_sf"/>
</dbReference>
<dbReference type="InterPro" id="IPR004412">
    <property type="entry name" value="GatA"/>
</dbReference>
<dbReference type="NCBIfam" id="TIGR00132">
    <property type="entry name" value="gatA"/>
    <property type="match status" value="1"/>
</dbReference>
<dbReference type="PANTHER" id="PTHR11895:SF151">
    <property type="entry name" value="GLUTAMYL-TRNA(GLN) AMIDOTRANSFERASE SUBUNIT A"/>
    <property type="match status" value="1"/>
</dbReference>
<dbReference type="PANTHER" id="PTHR11895">
    <property type="entry name" value="TRANSAMIDASE"/>
    <property type="match status" value="1"/>
</dbReference>
<dbReference type="Pfam" id="PF01425">
    <property type="entry name" value="Amidase"/>
    <property type="match status" value="1"/>
</dbReference>
<dbReference type="SUPFAM" id="SSF75304">
    <property type="entry name" value="Amidase signature (AS) enzymes"/>
    <property type="match status" value="1"/>
</dbReference>
<dbReference type="PROSITE" id="PS00571">
    <property type="entry name" value="AMIDASES"/>
    <property type="match status" value="1"/>
</dbReference>